<comment type="miscellaneous">
    <text>A stop codon is present at position 12 leading to a truncated form of PB1-F2.</text>
</comment>
<comment type="similarity">
    <text evidence="1">Belongs to the influenza viruses PB1-F2 family.</text>
</comment>
<protein>
    <recommendedName>
        <fullName>Protein PB1-F2</fullName>
    </recommendedName>
</protein>
<gene>
    <name type="primary">PB1</name>
    <name type="synonym">PB1-F2</name>
</gene>
<feature type="chain" id="PRO_0000373020" description="Protein PB1-F2">
    <location>
        <begin position="1"/>
        <end position="11"/>
    </location>
</feature>
<sequence length="11" mass="1271">MGQEQGIPWIL</sequence>
<proteinExistence type="inferred from homology"/>
<evidence type="ECO:0000305" key="1"/>
<organism>
    <name type="scientific">Influenza A virus (strain A/Swine/Wisconsin/1/1961 H1N1)</name>
    <dbReference type="NCBI Taxonomy" id="383533"/>
    <lineage>
        <taxon>Viruses</taxon>
        <taxon>Riboviria</taxon>
        <taxon>Orthornavirae</taxon>
        <taxon>Negarnaviricota</taxon>
        <taxon>Polyploviricotina</taxon>
        <taxon>Insthoviricetes</taxon>
        <taxon>Articulavirales</taxon>
        <taxon>Orthomyxoviridae</taxon>
        <taxon>Alphainfluenzavirus</taxon>
        <taxon>Alphainfluenzavirus influenzae</taxon>
        <taxon>Influenza A virus</taxon>
    </lineage>
</organism>
<name>PB1F2_I61A1</name>
<organismHost>
    <name type="scientific">Aves</name>
    <dbReference type="NCBI Taxonomy" id="8782"/>
</organismHost>
<organismHost>
    <name type="scientific">Homo sapiens</name>
    <name type="common">Human</name>
    <dbReference type="NCBI Taxonomy" id="9606"/>
</organismHost>
<organismHost>
    <name type="scientific">Sus scrofa</name>
    <name type="common">Pig</name>
    <dbReference type="NCBI Taxonomy" id="9823"/>
</organismHost>
<reference key="1">
    <citation type="submission" date="2008-06" db="EMBL/GenBank/DDBJ databases">
        <title>The NIAID influenza genome sequencing project.</title>
        <authorList>
            <person name="Spiro D."/>
            <person name="Halpin R."/>
            <person name="Boyne A."/>
            <person name="Bera J."/>
            <person name="Ghedin E."/>
            <person name="Hostetler J."/>
            <person name="Fedorova N."/>
            <person name="Kim M."/>
            <person name="Zaborsky J."/>
            <person name="Overton L."/>
            <person name="Djuric K."/>
            <person name="Sarmiento M."/>
            <person name="Sitz J."/>
            <person name="Katzel D."/>
            <person name="Webster R.G."/>
            <person name="Hoffmann E."/>
            <person name="Krauss S."/>
            <person name="Naeve C."/>
            <person name="Bolotov P."/>
            <person name="Bao Y."/>
            <person name="Sanders R."/>
            <person name="Dernovoy D."/>
            <person name="Kiryutin B."/>
            <person name="Lipman D.J."/>
            <person name="Tatusova T."/>
        </authorList>
    </citation>
    <scope>NUCLEOTIDE SEQUENCE [GENOMIC RNA]</scope>
</reference>
<dbReference type="EMBL" id="CY032219">
    <property type="protein sequence ID" value="ACD85163.1"/>
    <property type="status" value="ALT_SEQ"/>
    <property type="molecule type" value="Viral_cRNA"/>
</dbReference>
<dbReference type="Proteomes" id="UP000007769">
    <property type="component" value="Genome"/>
</dbReference>
<dbReference type="GO" id="GO:0039545">
    <property type="term" value="P:symbiont-mediated suppression of host cytoplasmic pattern recognition receptor signaling pathway via inhibition of MAVS activity"/>
    <property type="evidence" value="ECO:0000250"/>
    <property type="project" value="UniProtKB"/>
</dbReference>
<accession>B3EUR5</accession>